<protein>
    <recommendedName>
        <fullName>U6 snRNA-associated Sm-like protein LSm5</fullName>
    </recommendedName>
</protein>
<reference key="1">
    <citation type="journal article" date="1999" name="EMBO J.">
        <title>Sm and Sm-like proteins assemble in two related complexes of deep evolutionary origin.</title>
        <authorList>
            <person name="Salgado-Garrido J."/>
            <person name="Bragado-Nilsson E."/>
            <person name="Kandels-Lewis S."/>
            <person name="Seraphin B."/>
        </authorList>
    </citation>
    <scope>NUCLEOTIDE SEQUENCE [MRNA] (ISOFORM 1)</scope>
    <source>
        <tissue>Placenta</tissue>
    </source>
</reference>
<reference key="2">
    <citation type="journal article" date="1999" name="EMBO J.">
        <title>A doughnut-shaped heteromer of human Sm-like proteins binds to the 3'-end of U6 snRNA, thereby facilitating U4/U6 duplex formation in vitro.</title>
        <authorList>
            <person name="Achsel T."/>
            <person name="Brahms H."/>
            <person name="Kastner B."/>
            <person name="Bachi A."/>
            <person name="Wilm M."/>
            <person name="Luehrmann R."/>
        </authorList>
    </citation>
    <scope>NUCLEOTIDE SEQUENCE [MRNA] (ISOFORM 1)</scope>
    <scope>PARTIAL PROTEIN SEQUENCE</scope>
    <scope>SUBUNIT</scope>
    <scope>FUNCTION</scope>
    <scope>SUBCELLULAR LOCATION</scope>
</reference>
<reference key="3">
    <citation type="journal article" date="2003" name="Nature">
        <title>The DNA sequence of human chromosome 7.</title>
        <authorList>
            <person name="Hillier L.W."/>
            <person name="Fulton R.S."/>
            <person name="Fulton L.A."/>
            <person name="Graves T.A."/>
            <person name="Pepin K.H."/>
            <person name="Wagner-McPherson C."/>
            <person name="Layman D."/>
            <person name="Maas J."/>
            <person name="Jaeger S."/>
            <person name="Walker R."/>
            <person name="Wylie K."/>
            <person name="Sekhon M."/>
            <person name="Becker M.C."/>
            <person name="O'Laughlin M.D."/>
            <person name="Schaller M.E."/>
            <person name="Fewell G.A."/>
            <person name="Delehaunty K.D."/>
            <person name="Miner T.L."/>
            <person name="Nash W.E."/>
            <person name="Cordes M."/>
            <person name="Du H."/>
            <person name="Sun H."/>
            <person name="Edwards J."/>
            <person name="Bradshaw-Cordum H."/>
            <person name="Ali J."/>
            <person name="Andrews S."/>
            <person name="Isak A."/>
            <person name="Vanbrunt A."/>
            <person name="Nguyen C."/>
            <person name="Du F."/>
            <person name="Lamar B."/>
            <person name="Courtney L."/>
            <person name="Kalicki J."/>
            <person name="Ozersky P."/>
            <person name="Bielicki L."/>
            <person name="Scott K."/>
            <person name="Holmes A."/>
            <person name="Harkins R."/>
            <person name="Harris A."/>
            <person name="Strong C.M."/>
            <person name="Hou S."/>
            <person name="Tomlinson C."/>
            <person name="Dauphin-Kohlberg S."/>
            <person name="Kozlowicz-Reilly A."/>
            <person name="Leonard S."/>
            <person name="Rohlfing T."/>
            <person name="Rock S.M."/>
            <person name="Tin-Wollam A.-M."/>
            <person name="Abbott A."/>
            <person name="Minx P."/>
            <person name="Maupin R."/>
            <person name="Strowmatt C."/>
            <person name="Latreille P."/>
            <person name="Miller N."/>
            <person name="Johnson D."/>
            <person name="Murray J."/>
            <person name="Woessner J.P."/>
            <person name="Wendl M.C."/>
            <person name="Yang S.-P."/>
            <person name="Schultz B.R."/>
            <person name="Wallis J.W."/>
            <person name="Spieth J."/>
            <person name="Bieri T.A."/>
            <person name="Nelson J.O."/>
            <person name="Berkowicz N."/>
            <person name="Wohldmann P.E."/>
            <person name="Cook L.L."/>
            <person name="Hickenbotham M.T."/>
            <person name="Eldred J."/>
            <person name="Williams D."/>
            <person name="Bedell J.A."/>
            <person name="Mardis E.R."/>
            <person name="Clifton S.W."/>
            <person name="Chissoe S.L."/>
            <person name="Marra M.A."/>
            <person name="Raymond C."/>
            <person name="Haugen E."/>
            <person name="Gillett W."/>
            <person name="Zhou Y."/>
            <person name="James R."/>
            <person name="Phelps K."/>
            <person name="Iadanoto S."/>
            <person name="Bubb K."/>
            <person name="Simms E."/>
            <person name="Levy R."/>
            <person name="Clendenning J."/>
            <person name="Kaul R."/>
            <person name="Kent W.J."/>
            <person name="Furey T.S."/>
            <person name="Baertsch R.A."/>
            <person name="Brent M.R."/>
            <person name="Keibler E."/>
            <person name="Flicek P."/>
            <person name="Bork P."/>
            <person name="Suyama M."/>
            <person name="Bailey J.A."/>
            <person name="Portnoy M.E."/>
            <person name="Torrents D."/>
            <person name="Chinwalla A.T."/>
            <person name="Gish W.R."/>
            <person name="Eddy S.R."/>
            <person name="McPherson J.D."/>
            <person name="Olson M.V."/>
            <person name="Eichler E.E."/>
            <person name="Green E.D."/>
            <person name="Waterston R.H."/>
            <person name="Wilson R.K."/>
        </authorList>
    </citation>
    <scope>NUCLEOTIDE SEQUENCE [LARGE SCALE GENOMIC DNA]</scope>
</reference>
<reference key="4">
    <citation type="journal article" date="2004" name="Genome Res.">
        <title>The status, quality, and expansion of the NIH full-length cDNA project: the Mammalian Gene Collection (MGC).</title>
        <authorList>
            <consortium name="The MGC Project Team"/>
        </authorList>
    </citation>
    <scope>NUCLEOTIDE SEQUENCE [LARGE SCALE MRNA] (ISOFORMS 1 AND 2)</scope>
    <source>
        <tissue>Bone marrow</tissue>
        <tissue>Brain</tissue>
    </source>
</reference>
<reference key="5">
    <citation type="journal article" date="2009" name="Anal. Chem.">
        <title>Lys-N and trypsin cover complementary parts of the phosphoproteome in a refined SCX-based approach.</title>
        <authorList>
            <person name="Gauci S."/>
            <person name="Helbig A.O."/>
            <person name="Slijper M."/>
            <person name="Krijgsveld J."/>
            <person name="Heck A.J."/>
            <person name="Mohammed S."/>
        </authorList>
    </citation>
    <scope>ACETYLATION [LARGE SCALE ANALYSIS] AT ALA-2</scope>
    <scope>CLEAVAGE OF INITIATOR METHIONINE [LARGE SCALE ANALYSIS]</scope>
    <scope>IDENTIFICATION BY MASS SPECTROMETRY [LARGE SCALE ANALYSIS]</scope>
</reference>
<reference key="6">
    <citation type="journal article" date="2012" name="Mol. Cell. Proteomics">
        <title>Comparative large-scale characterisation of plant vs. mammal proteins reveals similar and idiosyncratic N-alpha acetylation features.</title>
        <authorList>
            <person name="Bienvenut W.V."/>
            <person name="Sumpton D."/>
            <person name="Martinez A."/>
            <person name="Lilla S."/>
            <person name="Espagne C."/>
            <person name="Meinnel T."/>
            <person name="Giglione C."/>
        </authorList>
    </citation>
    <scope>ACETYLATION [LARGE SCALE ANALYSIS] AT ALA-2</scope>
    <scope>CLEAVAGE OF INITIATOR METHIONINE [LARGE SCALE ANALYSIS]</scope>
    <scope>IDENTIFICATION BY MASS SPECTROMETRY [LARGE SCALE ANALYSIS]</scope>
</reference>
<reference key="7">
    <citation type="journal article" date="2012" name="Proc. Natl. Acad. Sci. U.S.A.">
        <title>N-terminal acetylome analyses and functional insights of the N-terminal acetyltransferase NatB.</title>
        <authorList>
            <person name="Van Damme P."/>
            <person name="Lasa M."/>
            <person name="Polevoda B."/>
            <person name="Gazquez C."/>
            <person name="Elosegui-Artola A."/>
            <person name="Kim D.S."/>
            <person name="De Juan-Pardo E."/>
            <person name="Demeyer K."/>
            <person name="Hole K."/>
            <person name="Larrea E."/>
            <person name="Timmerman E."/>
            <person name="Prieto J."/>
            <person name="Arnesen T."/>
            <person name="Sherman F."/>
            <person name="Gevaert K."/>
            <person name="Aldabe R."/>
        </authorList>
    </citation>
    <scope>ACETYLATION [LARGE SCALE ANALYSIS] AT ALA-2</scope>
    <scope>CLEAVAGE OF INITIATOR METHIONINE [LARGE SCALE ANALYSIS]</scope>
    <scope>IDENTIFICATION BY MASS SPECTROMETRY [LARGE SCALE ANALYSIS]</scope>
</reference>
<reference evidence="7" key="8">
    <citation type="journal article" date="2016" name="Science">
        <title>Molecular architecture of the human U4/U6.U5 tri-snRNP.</title>
        <authorList>
            <person name="Agafonov D.E."/>
            <person name="Kastner B."/>
            <person name="Dybkov O."/>
            <person name="Hofele R.V."/>
            <person name="Liu W.T."/>
            <person name="Urlaub H."/>
            <person name="Luhrmann R."/>
            <person name="Stark H."/>
        </authorList>
    </citation>
    <scope>STRUCTURE BY ELECTRON MICROSCOPY (7.00 ANGSTROMS)</scope>
    <scope>SUBCELLULAR LOCATION</scope>
    <scope>SUBUNIT</scope>
    <scope>IDENTIFICATION BY MASS SPECTROMETRY</scope>
</reference>
<reference evidence="8" key="9">
    <citation type="journal article" date="2017" name="Cell">
        <title>Cryo-EM Structure of a Pre-catalytic Human Spliceosome Primed for Activation.</title>
        <authorList>
            <person name="Bertram K."/>
            <person name="Agafonov D.E."/>
            <person name="Dybkov O."/>
            <person name="Haselbach D."/>
            <person name="Leelaram M.N."/>
            <person name="Will C.L."/>
            <person name="Urlaub H."/>
            <person name="Kastner B."/>
            <person name="Luhrmann R."/>
            <person name="Stark H."/>
        </authorList>
    </citation>
    <scope>STRUCTURE BY ELECTRON MICROSCOPY (4.50 ANGSTROMS)</scope>
    <scope>FUNCTION</scope>
    <scope>SUBCELLULAR LOCATION</scope>
    <scope>SUBUNIT</scope>
    <scope>IDENTIFICATION BY MASS SPECTROMETRY</scope>
</reference>
<dbReference type="EMBL" id="AJ238097">
    <property type="protein sequence ID" value="CAB45868.1"/>
    <property type="molecule type" value="mRNA"/>
</dbReference>
<dbReference type="EMBL" id="AF182291">
    <property type="protein sequence ID" value="AAD56229.1"/>
    <property type="molecule type" value="mRNA"/>
</dbReference>
<dbReference type="EMBL" id="AC018641">
    <property type="status" value="NOT_ANNOTATED_CDS"/>
    <property type="molecule type" value="Genomic_DNA"/>
</dbReference>
<dbReference type="EMBL" id="BC005938">
    <property type="protein sequence ID" value="AAH05938.1"/>
    <property type="molecule type" value="mRNA"/>
</dbReference>
<dbReference type="EMBL" id="BF701546">
    <property type="status" value="NOT_ANNOTATED_CDS"/>
    <property type="molecule type" value="mRNA"/>
</dbReference>
<dbReference type="CCDS" id="CCDS47571.1">
    <molecule id="Q9Y4Y9-2"/>
</dbReference>
<dbReference type="CCDS" id="CCDS5438.1">
    <molecule id="Q9Y4Y9-1"/>
</dbReference>
<dbReference type="RefSeq" id="NP_001124182.1">
    <molecule id="Q9Y4Y9-2"/>
    <property type="nucleotide sequence ID" value="NM_001130710.2"/>
</dbReference>
<dbReference type="RefSeq" id="NP_001132971.1">
    <molecule id="Q9Y4Y9-2"/>
    <property type="nucleotide sequence ID" value="NM_001139499.2"/>
</dbReference>
<dbReference type="RefSeq" id="NP_036454.1">
    <molecule id="Q9Y4Y9-1"/>
    <property type="nucleotide sequence ID" value="NM_012322.3"/>
</dbReference>
<dbReference type="RefSeq" id="XP_047276056.1">
    <molecule id="Q9Y4Y9-2"/>
    <property type="nucleotide sequence ID" value="XM_047420100.1"/>
</dbReference>
<dbReference type="RefSeq" id="XP_054213707.1">
    <molecule id="Q9Y4Y9-2"/>
    <property type="nucleotide sequence ID" value="XM_054357732.1"/>
</dbReference>
<dbReference type="PDB" id="3JCR">
    <property type="method" value="EM"/>
    <property type="resolution" value="7.00 A"/>
    <property type="chains" value="5=1-91"/>
</dbReference>
<dbReference type="PDB" id="5O9Z">
    <property type="method" value="EM"/>
    <property type="resolution" value="4.50 A"/>
    <property type="chains" value="r=1-91"/>
</dbReference>
<dbReference type="PDB" id="6AH0">
    <property type="method" value="EM"/>
    <property type="resolution" value="5.70 A"/>
    <property type="chains" value="t=1-91"/>
</dbReference>
<dbReference type="PDB" id="6AHD">
    <property type="method" value="EM"/>
    <property type="resolution" value="3.80 A"/>
    <property type="chains" value="t=1-91"/>
</dbReference>
<dbReference type="PDB" id="6QW6">
    <property type="method" value="EM"/>
    <property type="resolution" value="2.92 A"/>
    <property type="chains" value="65=1-91"/>
</dbReference>
<dbReference type="PDB" id="6QX9">
    <property type="method" value="EM"/>
    <property type="resolution" value="3.28 A"/>
    <property type="chains" value="65=1-91"/>
</dbReference>
<dbReference type="PDB" id="7ABG">
    <property type="method" value="EM"/>
    <property type="resolution" value="7.80 A"/>
    <property type="chains" value="H=1-91"/>
</dbReference>
<dbReference type="PDB" id="8H6E">
    <property type="method" value="EM"/>
    <property type="resolution" value="3.20 A"/>
    <property type="chains" value="6d=1-91"/>
</dbReference>
<dbReference type="PDB" id="8H6J">
    <property type="method" value="EM"/>
    <property type="resolution" value="3.25 A"/>
    <property type="chains" value="6d=1-91"/>
</dbReference>
<dbReference type="PDB" id="8H6K">
    <property type="method" value="EM"/>
    <property type="resolution" value="2.70 A"/>
    <property type="chains" value="6d=1-91"/>
</dbReference>
<dbReference type="PDB" id="8H6L">
    <property type="method" value="EM"/>
    <property type="resolution" value="2.60 A"/>
    <property type="chains" value="6d=1-91"/>
</dbReference>
<dbReference type="PDB" id="8QO9">
    <property type="method" value="EM"/>
    <property type="resolution" value="5.29 A"/>
    <property type="chains" value="65=1-91"/>
</dbReference>
<dbReference type="PDB" id="8QXD">
    <property type="method" value="EM"/>
    <property type="resolution" value="9.60 A"/>
    <property type="chains" value="65=1-91"/>
</dbReference>
<dbReference type="PDB" id="8QZS">
    <property type="method" value="EM"/>
    <property type="resolution" value="4.10 A"/>
    <property type="chains" value="65=1-91"/>
</dbReference>
<dbReference type="PDB" id="8R08">
    <property type="method" value="EM"/>
    <property type="resolution" value="6.10 A"/>
    <property type="chains" value="65=1-91"/>
</dbReference>
<dbReference type="PDB" id="8R09">
    <property type="method" value="EM"/>
    <property type="resolution" value="4.30 A"/>
    <property type="chains" value="65=1-91"/>
</dbReference>
<dbReference type="PDB" id="8R0A">
    <property type="method" value="EM"/>
    <property type="resolution" value="5.80 A"/>
    <property type="chains" value="65=1-91"/>
</dbReference>
<dbReference type="PDB" id="8R0B">
    <property type="method" value="EM"/>
    <property type="resolution" value="4.40 A"/>
    <property type="chains" value="65=1-91"/>
</dbReference>
<dbReference type="PDB" id="8RM5">
    <property type="method" value="EM"/>
    <property type="resolution" value="6.90 A"/>
    <property type="chains" value="65=1-91"/>
</dbReference>
<dbReference type="PDBsum" id="3JCR"/>
<dbReference type="PDBsum" id="5O9Z"/>
<dbReference type="PDBsum" id="6AH0"/>
<dbReference type="PDBsum" id="6AHD"/>
<dbReference type="PDBsum" id="6QW6"/>
<dbReference type="PDBsum" id="6QX9"/>
<dbReference type="PDBsum" id="7ABG"/>
<dbReference type="PDBsum" id="8H6E"/>
<dbReference type="PDBsum" id="8H6J"/>
<dbReference type="PDBsum" id="8H6K"/>
<dbReference type="PDBsum" id="8H6L"/>
<dbReference type="PDBsum" id="8QO9"/>
<dbReference type="PDBsum" id="8QXD"/>
<dbReference type="PDBsum" id="8QZS"/>
<dbReference type="PDBsum" id="8R08"/>
<dbReference type="PDBsum" id="8R09"/>
<dbReference type="PDBsum" id="8R0A"/>
<dbReference type="PDBsum" id="8R0B"/>
<dbReference type="PDBsum" id="8RM5"/>
<dbReference type="EMDB" id="EMD-11695"/>
<dbReference type="EMDB" id="EMD-18529"/>
<dbReference type="EMDB" id="EMD-18718"/>
<dbReference type="EMDB" id="EMD-18781"/>
<dbReference type="EMDB" id="EMD-18786"/>
<dbReference type="EMDB" id="EMD-18787"/>
<dbReference type="EMDB" id="EMD-18788"/>
<dbReference type="EMDB" id="EMD-18789"/>
<dbReference type="EMDB" id="EMD-19349"/>
<dbReference type="EMDB" id="EMD-34500"/>
<dbReference type="EMDB" id="EMD-34505"/>
<dbReference type="EMDB" id="EMD-34507"/>
<dbReference type="EMDB" id="EMD-34508"/>
<dbReference type="EMDB" id="EMD-3766"/>
<dbReference type="EMDB" id="EMD-4658"/>
<dbReference type="EMDB" id="EMD-4665"/>
<dbReference type="EMDB" id="EMD-9621"/>
<dbReference type="EMDB" id="EMD-9624"/>
<dbReference type="SMR" id="Q9Y4Y9"/>
<dbReference type="BioGRID" id="117180">
    <property type="interactions" value="82"/>
</dbReference>
<dbReference type="ComplexPortal" id="CPX-2391">
    <property type="entry name" value="U4/U6.U5 small nuclear ribonucleoprotein complex"/>
</dbReference>
<dbReference type="CORUM" id="Q9Y4Y9"/>
<dbReference type="DIP" id="DIP-31162N"/>
<dbReference type="FunCoup" id="Q9Y4Y9">
    <property type="interactions" value="1729"/>
</dbReference>
<dbReference type="IntAct" id="Q9Y4Y9">
    <property type="interactions" value="52"/>
</dbReference>
<dbReference type="MINT" id="Q9Y4Y9"/>
<dbReference type="STRING" id="9606.ENSP00000410758"/>
<dbReference type="iPTMnet" id="Q9Y4Y9"/>
<dbReference type="PhosphoSitePlus" id="Q9Y4Y9"/>
<dbReference type="SwissPalm" id="Q9Y4Y9"/>
<dbReference type="BioMuta" id="LSM5"/>
<dbReference type="DMDM" id="10720081"/>
<dbReference type="jPOST" id="Q9Y4Y9"/>
<dbReference type="MassIVE" id="Q9Y4Y9"/>
<dbReference type="PaxDb" id="9606-ENSP00000410758"/>
<dbReference type="PeptideAtlas" id="Q9Y4Y9"/>
<dbReference type="ProteomicsDB" id="86265">
    <molecule id="Q9Y4Y9-1"/>
</dbReference>
<dbReference type="ProteomicsDB" id="86266">
    <molecule id="Q9Y4Y9-2"/>
</dbReference>
<dbReference type="Pumba" id="Q9Y4Y9"/>
<dbReference type="TopDownProteomics" id="Q9Y4Y9-1">
    <molecule id="Q9Y4Y9-1"/>
</dbReference>
<dbReference type="TopDownProteomics" id="Q9Y4Y9-2">
    <molecule id="Q9Y4Y9-2"/>
</dbReference>
<dbReference type="Antibodypedia" id="44303">
    <property type="antibodies" value="73 antibodies from 25 providers"/>
</dbReference>
<dbReference type="DNASU" id="23658"/>
<dbReference type="Ensembl" id="ENST00000409292.5">
    <molecule id="Q9Y4Y9-2"/>
    <property type="protein sequence ID" value="ENSP00000386814.1"/>
    <property type="gene ID" value="ENSG00000106355.10"/>
</dbReference>
<dbReference type="Ensembl" id="ENST00000409782.5">
    <molecule id="Q9Y4Y9-2"/>
    <property type="protein sequence ID" value="ENSP00000387109.1"/>
    <property type="gene ID" value="ENSG00000106355.10"/>
</dbReference>
<dbReference type="Ensembl" id="ENST00000409909.7">
    <molecule id="Q9Y4Y9-2"/>
    <property type="protein sequence ID" value="ENSP00000386363.3"/>
    <property type="gene ID" value="ENSG00000106355.10"/>
</dbReference>
<dbReference type="Ensembl" id="ENST00000409952.3">
    <molecule id="Q9Y4Y9-2"/>
    <property type="protein sequence ID" value="ENSP00000387126.3"/>
    <property type="gene ID" value="ENSG00000106355.10"/>
</dbReference>
<dbReference type="Ensembl" id="ENST00000410044.5">
    <molecule id="Q9Y4Y9-2"/>
    <property type="protein sequence ID" value="ENSP00000386707.1"/>
    <property type="gene ID" value="ENSG00000106355.10"/>
</dbReference>
<dbReference type="Ensembl" id="ENST00000450169.7">
    <molecule id="Q9Y4Y9-1"/>
    <property type="protein sequence ID" value="ENSP00000410758.2"/>
    <property type="gene ID" value="ENSG00000106355.10"/>
</dbReference>
<dbReference type="GeneID" id="23658"/>
<dbReference type="KEGG" id="hsa:23658"/>
<dbReference type="MANE-Select" id="ENST00000450169.7">
    <property type="protein sequence ID" value="ENSP00000410758.2"/>
    <property type="RefSeq nucleotide sequence ID" value="NM_012322.3"/>
    <property type="RefSeq protein sequence ID" value="NP_036454.1"/>
</dbReference>
<dbReference type="UCSC" id="uc003tct.3">
    <molecule id="Q9Y4Y9-1"/>
    <property type="organism name" value="human"/>
</dbReference>
<dbReference type="AGR" id="HGNC:17162"/>
<dbReference type="CTD" id="23658"/>
<dbReference type="GeneCards" id="LSM5"/>
<dbReference type="HGNC" id="HGNC:17162">
    <property type="gene designation" value="LSM5"/>
</dbReference>
<dbReference type="HPA" id="ENSG00000106355">
    <property type="expression patterns" value="Low tissue specificity"/>
</dbReference>
<dbReference type="MIM" id="607285">
    <property type="type" value="gene"/>
</dbReference>
<dbReference type="neXtProt" id="NX_Q9Y4Y9"/>
<dbReference type="OpenTargets" id="ENSG00000106355"/>
<dbReference type="PharmGKB" id="PA134881171"/>
<dbReference type="VEuPathDB" id="HostDB:ENSG00000106355"/>
<dbReference type="eggNOG" id="KOG1775">
    <property type="taxonomic scope" value="Eukaryota"/>
</dbReference>
<dbReference type="GeneTree" id="ENSGT00390000001455"/>
<dbReference type="HOGENOM" id="CLU_076902_6_1_1"/>
<dbReference type="InParanoid" id="Q9Y4Y9"/>
<dbReference type="OMA" id="YETTPQG"/>
<dbReference type="OrthoDB" id="429711at2759"/>
<dbReference type="PAN-GO" id="Q9Y4Y9">
    <property type="GO annotations" value="5 GO annotations based on evolutionary models"/>
</dbReference>
<dbReference type="PhylomeDB" id="Q9Y4Y9"/>
<dbReference type="TreeFam" id="TF313575"/>
<dbReference type="PathwayCommons" id="Q9Y4Y9"/>
<dbReference type="Reactome" id="R-HSA-430039">
    <property type="pathway name" value="mRNA decay by 5' to 3' exoribonuclease"/>
</dbReference>
<dbReference type="Reactome" id="R-HSA-72163">
    <property type="pathway name" value="mRNA Splicing - Major Pathway"/>
</dbReference>
<dbReference type="SignaLink" id="Q9Y4Y9"/>
<dbReference type="SIGNOR" id="Q9Y4Y9"/>
<dbReference type="BioGRID-ORCS" id="23658">
    <property type="hits" value="676 hits in 1128 CRISPR screens"/>
</dbReference>
<dbReference type="CD-CODE" id="232F8A39">
    <property type="entry name" value="P-body"/>
</dbReference>
<dbReference type="ChiTaRS" id="LSM5">
    <property type="organism name" value="human"/>
</dbReference>
<dbReference type="GeneWiki" id="LSM5"/>
<dbReference type="GenomeRNAi" id="23658"/>
<dbReference type="Pharos" id="Q9Y4Y9">
    <property type="development level" value="Tbio"/>
</dbReference>
<dbReference type="PRO" id="PR:Q9Y4Y9"/>
<dbReference type="Proteomes" id="UP000005640">
    <property type="component" value="Chromosome 7"/>
</dbReference>
<dbReference type="RNAct" id="Q9Y4Y9">
    <property type="molecule type" value="protein"/>
</dbReference>
<dbReference type="Bgee" id="ENSG00000106355">
    <property type="expression patterns" value="Expressed in ventricular zone and 214 other cell types or tissues"/>
</dbReference>
<dbReference type="ExpressionAtlas" id="Q9Y4Y9">
    <property type="expression patterns" value="baseline and differential"/>
</dbReference>
<dbReference type="GO" id="GO:0005737">
    <property type="term" value="C:cytoplasm"/>
    <property type="evidence" value="ECO:0000314"/>
    <property type="project" value="MGI"/>
</dbReference>
<dbReference type="GO" id="GO:0005829">
    <property type="term" value="C:cytosol"/>
    <property type="evidence" value="ECO:0000304"/>
    <property type="project" value="Reactome"/>
</dbReference>
<dbReference type="GO" id="GO:1990726">
    <property type="term" value="C:Lsm1-7-Pat1 complex"/>
    <property type="evidence" value="ECO:0000318"/>
    <property type="project" value="GO_Central"/>
</dbReference>
<dbReference type="GO" id="GO:0120115">
    <property type="term" value="C:Lsm2-8 complex"/>
    <property type="evidence" value="ECO:0000314"/>
    <property type="project" value="UniProtKB"/>
</dbReference>
<dbReference type="GO" id="GO:0005654">
    <property type="term" value="C:nucleoplasm"/>
    <property type="evidence" value="ECO:0000304"/>
    <property type="project" value="Reactome"/>
</dbReference>
<dbReference type="GO" id="GO:0005634">
    <property type="term" value="C:nucleus"/>
    <property type="evidence" value="ECO:0000314"/>
    <property type="project" value="UniProtKB"/>
</dbReference>
<dbReference type="GO" id="GO:0071005">
    <property type="term" value="C:U2-type precatalytic spliceosome"/>
    <property type="evidence" value="ECO:0000314"/>
    <property type="project" value="UniProtKB"/>
</dbReference>
<dbReference type="GO" id="GO:0046540">
    <property type="term" value="C:U4/U6 x U5 tri-snRNP complex"/>
    <property type="evidence" value="ECO:0000314"/>
    <property type="project" value="UniProtKB"/>
</dbReference>
<dbReference type="GO" id="GO:0005688">
    <property type="term" value="C:U6 snRNP"/>
    <property type="evidence" value="ECO:0000318"/>
    <property type="project" value="GO_Central"/>
</dbReference>
<dbReference type="GO" id="GO:0046982">
    <property type="term" value="F:protein heterodimerization activity"/>
    <property type="evidence" value="ECO:0000314"/>
    <property type="project" value="MGI"/>
</dbReference>
<dbReference type="GO" id="GO:0003723">
    <property type="term" value="F:RNA binding"/>
    <property type="evidence" value="ECO:0000304"/>
    <property type="project" value="ProtInc"/>
</dbReference>
<dbReference type="GO" id="GO:0006402">
    <property type="term" value="P:mRNA catabolic process"/>
    <property type="evidence" value="ECO:0000314"/>
    <property type="project" value="MGI"/>
</dbReference>
<dbReference type="GO" id="GO:0006397">
    <property type="term" value="P:mRNA processing"/>
    <property type="evidence" value="ECO:0000304"/>
    <property type="project" value="ProtInc"/>
</dbReference>
<dbReference type="GO" id="GO:0000398">
    <property type="term" value="P:mRNA splicing, via spliceosome"/>
    <property type="evidence" value="ECO:0000314"/>
    <property type="project" value="UniProtKB"/>
</dbReference>
<dbReference type="GO" id="GO:0009617">
    <property type="term" value="P:response to bacterium"/>
    <property type="evidence" value="ECO:0007669"/>
    <property type="project" value="Ensembl"/>
</dbReference>
<dbReference type="CDD" id="cd01732">
    <property type="entry name" value="LSm5"/>
    <property type="match status" value="1"/>
</dbReference>
<dbReference type="FunFam" id="2.30.30.100:FF:000003">
    <property type="entry name" value="U6 snRNA-associated Sm-like protein LSm5"/>
    <property type="match status" value="1"/>
</dbReference>
<dbReference type="Gene3D" id="2.30.30.100">
    <property type="match status" value="1"/>
</dbReference>
<dbReference type="InterPro" id="IPR033871">
    <property type="entry name" value="LSm5"/>
</dbReference>
<dbReference type="InterPro" id="IPR010920">
    <property type="entry name" value="LSM_dom_sf"/>
</dbReference>
<dbReference type="InterPro" id="IPR047575">
    <property type="entry name" value="Sm"/>
</dbReference>
<dbReference type="InterPro" id="IPR001163">
    <property type="entry name" value="Sm_dom_euk/arc"/>
</dbReference>
<dbReference type="PANTHER" id="PTHR20971">
    <property type="entry name" value="U6 SNRNA-ASSOCIATED PROTEIN"/>
    <property type="match status" value="1"/>
</dbReference>
<dbReference type="PANTHER" id="PTHR20971:SF0">
    <property type="entry name" value="U6 SNRNA-ASSOCIATED SM-LIKE PROTEIN LSM5"/>
    <property type="match status" value="1"/>
</dbReference>
<dbReference type="Pfam" id="PF01423">
    <property type="entry name" value="LSM"/>
    <property type="match status" value="1"/>
</dbReference>
<dbReference type="SMART" id="SM00651">
    <property type="entry name" value="Sm"/>
    <property type="match status" value="1"/>
</dbReference>
<dbReference type="SUPFAM" id="SSF50182">
    <property type="entry name" value="Sm-like ribonucleoproteins"/>
    <property type="match status" value="1"/>
</dbReference>
<dbReference type="PROSITE" id="PS52002">
    <property type="entry name" value="SM"/>
    <property type="match status" value="1"/>
</dbReference>
<proteinExistence type="evidence at protein level"/>
<feature type="initiator methionine" description="Removed" evidence="9 10 11">
    <location>
        <position position="1"/>
    </location>
</feature>
<feature type="chain" id="PRO_0000125572" description="U6 snRNA-associated Sm-like protein LSm5">
    <location>
        <begin position="2"/>
        <end position="91"/>
    </location>
</feature>
<feature type="domain" description="Sm" evidence="1">
    <location>
        <begin position="13"/>
        <end position="88"/>
    </location>
</feature>
<feature type="modified residue" description="N-acetylalanine" evidence="9 10 11">
    <location>
        <position position="2"/>
    </location>
</feature>
<feature type="splice variant" id="VSP_040991" description="In isoform 2." evidence="5">
    <location>
        <begin position="1"/>
        <end position="29"/>
    </location>
</feature>
<sequence length="91" mass="9937">MAANATTNPSQLLPLELVDKCIGSRIHIVMKSDKEIVGTLLGFDDFVNMVLEDVTEFEITPEGRRITKLDQILLNGNNITMLVPGGEGPEV</sequence>
<accession>Q9Y4Y9</accession>
<name>LSM5_HUMAN</name>
<organism>
    <name type="scientific">Homo sapiens</name>
    <name type="common">Human</name>
    <dbReference type="NCBI Taxonomy" id="9606"/>
    <lineage>
        <taxon>Eukaryota</taxon>
        <taxon>Metazoa</taxon>
        <taxon>Chordata</taxon>
        <taxon>Craniata</taxon>
        <taxon>Vertebrata</taxon>
        <taxon>Euteleostomi</taxon>
        <taxon>Mammalia</taxon>
        <taxon>Eutheria</taxon>
        <taxon>Euarchontoglires</taxon>
        <taxon>Primates</taxon>
        <taxon>Haplorrhini</taxon>
        <taxon>Catarrhini</taxon>
        <taxon>Hominidae</taxon>
        <taxon>Homo</taxon>
    </lineage>
</organism>
<keyword id="KW-0002">3D-structure</keyword>
<keyword id="KW-0007">Acetylation</keyword>
<keyword id="KW-0025">Alternative splicing</keyword>
<keyword id="KW-0903">Direct protein sequencing</keyword>
<keyword id="KW-0507">mRNA processing</keyword>
<keyword id="KW-0508">mRNA splicing</keyword>
<keyword id="KW-0539">Nucleus</keyword>
<keyword id="KW-1267">Proteomics identification</keyword>
<keyword id="KW-1185">Reference proteome</keyword>
<keyword id="KW-0687">Ribonucleoprotein</keyword>
<keyword id="KW-0694">RNA-binding</keyword>
<keyword id="KW-0747">Spliceosome</keyword>
<comment type="function">
    <text evidence="2 4">Plays a role in pre-mRNA splicing as component of the U4/U6-U5 tri-snRNP complex that is involved in spliceosome assembly, and as component of the precatalytic spliceosome (spliceosome B complex) (PubMed:28781166). The heptameric LSM2-8 complex binds specifically to the 3'-terminal U-tract of U6 snRNA (PubMed:10523320).</text>
</comment>
<comment type="subunit">
    <text evidence="2 3 4">Component of the precatalytic spliceosome (spliceosome B complex) (PubMed:28781166). Component of the U4/U6-U5 tri-snRNP complex, a building block of the precatalytic spliceosome (spliceosome B complex) (PubMed:10523320, PubMed:26912367, PubMed:28781166). The U4/U6-U5 tri-snRNP complex is composed of the U4, U6 and U5 snRNAs and at least PRPF3, PRPF4, PRPF6, PRPF8, PRPF31, SNRNP200, TXNL4A, SNRNP40, SNRPB, SNRPD1, SNRPD2, SNRPD3, SNRPE, SNRPF, SNRPG, DDX23, CD2BP2, PPIH, SNU13, EFTUD2, SART1 and USP39, plus LSM2, LSM3, LSM4, LSM5, LSM6, LSM7 and LSM8 (PubMed:26912367). LSM2, LSM3, LSM4, LSM5, LSM6, LSM7 and LSM8 form a heptameric, ring-shaped subcomplex (the LSM2-8 complex) that is part of the U4/U6-U5 tri-snRNP complex and the precatalytic spliceosome (PubMed:10523320, PubMed:26912367, PubMed:28781166).</text>
</comment>
<comment type="interaction">
    <interactant intactId="EBI-373007">
        <id>Q9Y4Y9</id>
    </interactant>
    <interactant intactId="EBI-742054">
        <id>Q96D03</id>
        <label>DDIT4L</label>
    </interactant>
    <organismsDiffer>false</organismsDiffer>
    <experiments>3</experiments>
</comment>
<comment type="interaction">
    <interactant intactId="EBI-373007">
        <id>Q9Y4Y9</id>
    </interactant>
    <interactant intactId="EBI-348239">
        <id>P62310</id>
        <label>LSM3</label>
    </interactant>
    <organismsDiffer>false</organismsDiffer>
    <experiments>8</experiments>
</comment>
<comment type="interaction">
    <interactant intactId="EBI-373007">
        <id>Q9Y4Y9</id>
    </interactant>
    <interactant intactId="EBI-373310">
        <id>P62312</id>
        <label>LSM6</label>
    </interactant>
    <organismsDiffer>false</organismsDiffer>
    <experiments>15</experiments>
</comment>
<comment type="interaction">
    <interactant intactId="EBI-373007">
        <id>Q9Y4Y9</id>
    </interactant>
    <interactant intactId="EBI-348372">
        <id>Q9UK45</id>
        <label>LSM7</label>
    </interactant>
    <organismsDiffer>false</organismsDiffer>
    <experiments>20</experiments>
</comment>
<comment type="interaction">
    <interactant intactId="EBI-373007">
        <id>Q9Y4Y9</id>
    </interactant>
    <interactant intactId="EBI-751877">
        <id>Q9H4B4</id>
        <label>PLK3</label>
    </interactant>
    <organismsDiffer>false</organismsDiffer>
    <experiments>3</experiments>
</comment>
<comment type="interaction">
    <interactant intactId="EBI-373007">
        <id>Q9Y4Y9</id>
    </interactant>
    <interactant intactId="EBI-348082">
        <id>P62304</id>
        <label>SNRPE</label>
    </interactant>
    <organismsDiffer>false</organismsDiffer>
    <experiments>5</experiments>
</comment>
<comment type="interaction">
    <interactant intactId="EBI-373007">
        <id>Q9Y4Y9</id>
    </interactant>
    <interactant intactId="EBI-356900">
        <id>P62306</id>
        <label>SNRPF</label>
    </interactant>
    <organismsDiffer>false</organismsDiffer>
    <experiments>13</experiments>
</comment>
<comment type="interaction">
    <interactant intactId="EBI-373007">
        <id>Q9Y4Y9</id>
    </interactant>
    <interactant intactId="EBI-18115728">
        <id>Q6ZNM6</id>
        <label>SPMIP10</label>
    </interactant>
    <organismsDiffer>false</organismsDiffer>
    <experiments>3</experiments>
</comment>
<comment type="interaction">
    <interactant intactId="EBI-373007">
        <id>Q9Y4Y9</id>
    </interactant>
    <interactant intactId="EBI-716225">
        <id>P62380</id>
        <label>TBPL1</label>
    </interactant>
    <organismsDiffer>false</organismsDiffer>
    <experiments>3</experiments>
</comment>
<comment type="interaction">
    <interactant intactId="EBI-373007">
        <id>Q9Y4Y9</id>
    </interactant>
    <interactant intactId="EBI-727338">
        <id>O95988</id>
        <label>TCL1B</label>
    </interactant>
    <organismsDiffer>false</organismsDiffer>
    <experiments>3</experiments>
</comment>
<comment type="subcellular location">
    <subcellularLocation>
        <location evidence="2 3 4">Nucleus</location>
    </subcellularLocation>
</comment>
<comment type="alternative products">
    <event type="alternative splicing"/>
    <isoform>
        <id>Q9Y4Y9-1</id>
        <name>1</name>
        <sequence type="displayed"/>
    </isoform>
    <isoform>
        <id>Q9Y4Y9-2</id>
        <name>2</name>
        <sequence type="described" ref="VSP_040991"/>
    </isoform>
</comment>
<comment type="similarity">
    <text evidence="6">Belongs to the snRNP Sm proteins family.</text>
</comment>
<gene>
    <name type="primary">LSM5</name>
</gene>
<evidence type="ECO:0000255" key="1">
    <source>
        <dbReference type="PROSITE-ProRule" id="PRU01346"/>
    </source>
</evidence>
<evidence type="ECO:0000269" key="2">
    <source>
    </source>
</evidence>
<evidence type="ECO:0000269" key="3">
    <source>
    </source>
</evidence>
<evidence type="ECO:0000269" key="4">
    <source>
    </source>
</evidence>
<evidence type="ECO:0000303" key="5">
    <source>
    </source>
</evidence>
<evidence type="ECO:0000305" key="6"/>
<evidence type="ECO:0007744" key="7">
    <source>
        <dbReference type="PDB" id="3JCR"/>
    </source>
</evidence>
<evidence type="ECO:0007744" key="8">
    <source>
        <dbReference type="PDB" id="5O9Z"/>
    </source>
</evidence>
<evidence type="ECO:0007744" key="9">
    <source>
    </source>
</evidence>
<evidence type="ECO:0007744" key="10">
    <source>
    </source>
</evidence>
<evidence type="ECO:0007744" key="11">
    <source>
    </source>
</evidence>